<feature type="chain" id="PRO_1000052958" description="Large ribosomal subunit protein bL25">
    <location>
        <begin position="1"/>
        <end position="95"/>
    </location>
</feature>
<sequence length="95" mass="10594">MAFKFNAEVRTAQGKGASRRLRHNGQIPAIVYGGSEEPVSIILNHDELNNAQAHESFYSEVITLVIGGKEVAVKVQAMQRHPFKPKLVHIDFKRA</sequence>
<comment type="function">
    <text evidence="1">This is one of the proteins that binds to the 5S RNA in the ribosome where it forms part of the central protuberance.</text>
</comment>
<comment type="subunit">
    <text evidence="1">Part of the 50S ribosomal subunit; part of the 5S rRNA/L5/L18/L25 subcomplex. Contacts the 5S rRNA. Binds to the 5S rRNA independently of L5 and L18.</text>
</comment>
<comment type="similarity">
    <text evidence="1">Belongs to the bacterial ribosomal protein bL25 family.</text>
</comment>
<proteinExistence type="inferred from homology"/>
<gene>
    <name evidence="1" type="primary">rplY</name>
    <name type="ordered locus">CGSHiGG_09940</name>
</gene>
<organism>
    <name type="scientific">Haemophilus influenzae (strain PittGG)</name>
    <dbReference type="NCBI Taxonomy" id="374931"/>
    <lineage>
        <taxon>Bacteria</taxon>
        <taxon>Pseudomonadati</taxon>
        <taxon>Pseudomonadota</taxon>
        <taxon>Gammaproteobacteria</taxon>
        <taxon>Pasteurellales</taxon>
        <taxon>Pasteurellaceae</taxon>
        <taxon>Haemophilus</taxon>
    </lineage>
</organism>
<reference key="1">
    <citation type="journal article" date="2007" name="Genome Biol.">
        <title>Characterization and modeling of the Haemophilus influenzae core and supragenomes based on the complete genomic sequences of Rd and 12 clinical nontypeable strains.</title>
        <authorList>
            <person name="Hogg J.S."/>
            <person name="Hu F.Z."/>
            <person name="Janto B."/>
            <person name="Boissy R."/>
            <person name="Hayes J."/>
            <person name="Keefe R."/>
            <person name="Post J.C."/>
            <person name="Ehrlich G.D."/>
        </authorList>
    </citation>
    <scope>NUCLEOTIDE SEQUENCE [LARGE SCALE GENOMIC DNA]</scope>
    <source>
        <strain>PittGG</strain>
    </source>
</reference>
<protein>
    <recommendedName>
        <fullName evidence="1">Large ribosomal subunit protein bL25</fullName>
    </recommendedName>
    <alternativeName>
        <fullName evidence="2">50S ribosomal protein L25</fullName>
    </alternativeName>
</protein>
<evidence type="ECO:0000255" key="1">
    <source>
        <dbReference type="HAMAP-Rule" id="MF_01336"/>
    </source>
</evidence>
<evidence type="ECO:0000305" key="2"/>
<dbReference type="EMBL" id="CP000672">
    <property type="protein sequence ID" value="ABR00751.1"/>
    <property type="molecule type" value="Genomic_DNA"/>
</dbReference>
<dbReference type="SMR" id="A5UIZ5"/>
<dbReference type="KEGG" id="hiq:CGSHiGG_09940"/>
<dbReference type="HOGENOM" id="CLU_137946_0_0_6"/>
<dbReference type="Proteomes" id="UP000001990">
    <property type="component" value="Chromosome"/>
</dbReference>
<dbReference type="GO" id="GO:0022625">
    <property type="term" value="C:cytosolic large ribosomal subunit"/>
    <property type="evidence" value="ECO:0007669"/>
    <property type="project" value="TreeGrafter"/>
</dbReference>
<dbReference type="GO" id="GO:0008097">
    <property type="term" value="F:5S rRNA binding"/>
    <property type="evidence" value="ECO:0007669"/>
    <property type="project" value="InterPro"/>
</dbReference>
<dbReference type="GO" id="GO:0003735">
    <property type="term" value="F:structural constituent of ribosome"/>
    <property type="evidence" value="ECO:0007669"/>
    <property type="project" value="InterPro"/>
</dbReference>
<dbReference type="GO" id="GO:0006412">
    <property type="term" value="P:translation"/>
    <property type="evidence" value="ECO:0007669"/>
    <property type="project" value="UniProtKB-UniRule"/>
</dbReference>
<dbReference type="CDD" id="cd00495">
    <property type="entry name" value="Ribosomal_L25_TL5_CTC"/>
    <property type="match status" value="1"/>
</dbReference>
<dbReference type="FunFam" id="2.40.240.10:FF:000002">
    <property type="entry name" value="50S ribosomal protein L25"/>
    <property type="match status" value="1"/>
</dbReference>
<dbReference type="Gene3D" id="2.40.240.10">
    <property type="entry name" value="Ribosomal Protein L25, Chain P"/>
    <property type="match status" value="1"/>
</dbReference>
<dbReference type="HAMAP" id="MF_01336">
    <property type="entry name" value="Ribosomal_bL25"/>
    <property type="match status" value="1"/>
</dbReference>
<dbReference type="InterPro" id="IPR020056">
    <property type="entry name" value="Rbsml_bL25/Gln-tRNA_synth_N"/>
</dbReference>
<dbReference type="InterPro" id="IPR011035">
    <property type="entry name" value="Ribosomal_bL25/Gln-tRNA_synth"/>
</dbReference>
<dbReference type="InterPro" id="IPR020055">
    <property type="entry name" value="Ribosomal_bL25_short"/>
</dbReference>
<dbReference type="InterPro" id="IPR029751">
    <property type="entry name" value="Ribosomal_L25_dom"/>
</dbReference>
<dbReference type="InterPro" id="IPR020930">
    <property type="entry name" value="Ribosomal_uL5_bac-type"/>
</dbReference>
<dbReference type="NCBIfam" id="NF004612">
    <property type="entry name" value="PRK05943.1"/>
    <property type="match status" value="1"/>
</dbReference>
<dbReference type="PANTHER" id="PTHR33284">
    <property type="entry name" value="RIBOSOMAL PROTEIN L25/GLN-TRNA SYNTHETASE, ANTI-CODON-BINDING DOMAIN-CONTAINING PROTEIN"/>
    <property type="match status" value="1"/>
</dbReference>
<dbReference type="PANTHER" id="PTHR33284:SF1">
    <property type="entry name" value="RIBOSOMAL PROTEIN L25_GLN-TRNA SYNTHETASE, ANTI-CODON-BINDING DOMAIN-CONTAINING PROTEIN"/>
    <property type="match status" value="1"/>
</dbReference>
<dbReference type="Pfam" id="PF01386">
    <property type="entry name" value="Ribosomal_L25p"/>
    <property type="match status" value="1"/>
</dbReference>
<dbReference type="SUPFAM" id="SSF50715">
    <property type="entry name" value="Ribosomal protein L25-like"/>
    <property type="match status" value="1"/>
</dbReference>
<accession>A5UIZ5</accession>
<keyword id="KW-0687">Ribonucleoprotein</keyword>
<keyword id="KW-0689">Ribosomal protein</keyword>
<keyword id="KW-0694">RNA-binding</keyword>
<keyword id="KW-0699">rRNA-binding</keyword>
<name>RL25_HAEIG</name>